<gene>
    <name type="primary">MT-CYB</name>
    <name type="synonym">COB</name>
    <name type="synonym">CYTB</name>
    <name type="synonym">MTCYB</name>
</gene>
<dbReference type="EMBL" id="U82329">
    <property type="protein sequence ID" value="AAB41017.1"/>
    <property type="molecule type" value="Genomic_DNA"/>
</dbReference>
<dbReference type="SMR" id="P87410"/>
<dbReference type="GO" id="GO:0005743">
    <property type="term" value="C:mitochondrial inner membrane"/>
    <property type="evidence" value="ECO:0007669"/>
    <property type="project" value="UniProtKB-SubCell"/>
</dbReference>
<dbReference type="GO" id="GO:0045275">
    <property type="term" value="C:respiratory chain complex III"/>
    <property type="evidence" value="ECO:0007669"/>
    <property type="project" value="InterPro"/>
</dbReference>
<dbReference type="GO" id="GO:0046872">
    <property type="term" value="F:metal ion binding"/>
    <property type="evidence" value="ECO:0007669"/>
    <property type="project" value="UniProtKB-KW"/>
</dbReference>
<dbReference type="GO" id="GO:0008121">
    <property type="term" value="F:ubiquinol-cytochrome-c reductase activity"/>
    <property type="evidence" value="ECO:0007669"/>
    <property type="project" value="InterPro"/>
</dbReference>
<dbReference type="GO" id="GO:0006122">
    <property type="term" value="P:mitochondrial electron transport, ubiquinol to cytochrome c"/>
    <property type="evidence" value="ECO:0007669"/>
    <property type="project" value="TreeGrafter"/>
</dbReference>
<dbReference type="CDD" id="cd00290">
    <property type="entry name" value="cytochrome_b_C"/>
    <property type="match status" value="1"/>
</dbReference>
<dbReference type="CDD" id="cd00284">
    <property type="entry name" value="Cytochrome_b_N"/>
    <property type="match status" value="1"/>
</dbReference>
<dbReference type="FunFam" id="1.20.810.10:FF:000002">
    <property type="entry name" value="Cytochrome b"/>
    <property type="match status" value="1"/>
</dbReference>
<dbReference type="Gene3D" id="1.20.810.10">
    <property type="entry name" value="Cytochrome Bc1 Complex, Chain C"/>
    <property type="match status" value="1"/>
</dbReference>
<dbReference type="InterPro" id="IPR005798">
    <property type="entry name" value="Cyt_b/b6_C"/>
</dbReference>
<dbReference type="InterPro" id="IPR036150">
    <property type="entry name" value="Cyt_b/b6_C_sf"/>
</dbReference>
<dbReference type="InterPro" id="IPR005797">
    <property type="entry name" value="Cyt_b/b6_N"/>
</dbReference>
<dbReference type="InterPro" id="IPR027387">
    <property type="entry name" value="Cytb/b6-like_sf"/>
</dbReference>
<dbReference type="InterPro" id="IPR030689">
    <property type="entry name" value="Cytochrome_b"/>
</dbReference>
<dbReference type="InterPro" id="IPR048260">
    <property type="entry name" value="Cytochrome_b_C_euk/bac"/>
</dbReference>
<dbReference type="InterPro" id="IPR048259">
    <property type="entry name" value="Cytochrome_b_N_euk/bac"/>
</dbReference>
<dbReference type="InterPro" id="IPR016174">
    <property type="entry name" value="Di-haem_cyt_TM"/>
</dbReference>
<dbReference type="PANTHER" id="PTHR19271">
    <property type="entry name" value="CYTOCHROME B"/>
    <property type="match status" value="1"/>
</dbReference>
<dbReference type="PANTHER" id="PTHR19271:SF16">
    <property type="entry name" value="CYTOCHROME B"/>
    <property type="match status" value="1"/>
</dbReference>
<dbReference type="Pfam" id="PF00032">
    <property type="entry name" value="Cytochrom_B_C"/>
    <property type="match status" value="1"/>
</dbReference>
<dbReference type="Pfam" id="PF00033">
    <property type="entry name" value="Cytochrome_B"/>
    <property type="match status" value="1"/>
</dbReference>
<dbReference type="PIRSF" id="PIRSF038885">
    <property type="entry name" value="COB"/>
    <property type="match status" value="1"/>
</dbReference>
<dbReference type="SUPFAM" id="SSF81648">
    <property type="entry name" value="a domain/subunit of cytochrome bc1 complex (Ubiquinol-cytochrome c reductase)"/>
    <property type="match status" value="1"/>
</dbReference>
<dbReference type="SUPFAM" id="SSF81342">
    <property type="entry name" value="Transmembrane di-heme cytochromes"/>
    <property type="match status" value="1"/>
</dbReference>
<dbReference type="PROSITE" id="PS51003">
    <property type="entry name" value="CYTB_CTER"/>
    <property type="match status" value="1"/>
</dbReference>
<dbReference type="PROSITE" id="PS51002">
    <property type="entry name" value="CYTB_NTER"/>
    <property type="match status" value="1"/>
</dbReference>
<sequence>MTNLRKTHPLMKIINHSFIDLPAPSNISAWWNFGSLLGVCLIIQILTGLFLAMHYTSDTLTAFSSVAHICRDVNYGWLIRNLHANGASMFFMCLFLHVGRGIYYGSYLYKETWNIGVILLLTVMATAFVGYVLPWGQMSFWGATVITNLLSAIPYIGTSLVEWIWGGFSVDKATLTRFFALHFILPFIITALVIVHLLFLHETGSNNPSGINPNSDKIPFHPYYTIKDALGLILLLLPLLTLALFSPDLLGDPDNFSPANPLNTPPHIKPEWYFLFAYAILRSIPNKLGGVLALLASILVLLIIPLLHTANQRSMMFRPVSQTLFWILAANLITLTWIGGQPVEQPFIIIGQLALYLYFLLILVLMPLAGLFENYMLEPKW</sequence>
<proteinExistence type="inferred from homology"/>
<reference key="1">
    <citation type="journal article" date="1993" name="Sci. New Guinea">
        <title>Molecular systematics of New Guinean dasyurids (Marsupialia: Dasyuridae).</title>
        <authorList>
            <person name="Krajewski C."/>
            <person name="Painter J."/>
            <person name="Driskell A.C."/>
            <person name="Buckley L."/>
            <person name="Westerman M."/>
        </authorList>
    </citation>
    <scope>NUCLEOTIDE SEQUENCE [GENOMIC DNA]</scope>
</reference>
<name>CYB_MYRFA</name>
<comment type="function">
    <text evidence="2">Component of the ubiquinol-cytochrome c reductase complex (complex III or cytochrome b-c1 complex) that is part of the mitochondrial respiratory chain. The b-c1 complex mediates electron transfer from ubiquinol to cytochrome c. Contributes to the generation of a proton gradient across the mitochondrial membrane that is then used for ATP synthesis.</text>
</comment>
<comment type="cofactor">
    <cofactor evidence="2">
        <name>heme b</name>
        <dbReference type="ChEBI" id="CHEBI:60344"/>
    </cofactor>
    <text evidence="2">Binds 2 heme b groups non-covalently.</text>
</comment>
<comment type="subunit">
    <text evidence="2">The cytochrome bc1 complex contains 11 subunits: 3 respiratory subunits (MT-CYB, CYC1 and UQCRFS1), 2 core proteins (UQCRC1 and UQCRC2) and 6 low-molecular weight proteins (UQCRH/QCR6, UQCRB/QCR7, UQCRQ/QCR8, UQCR10/QCR9, UQCR11/QCR10 and a cleavage product of UQCRFS1). This cytochrome bc1 complex then forms a dimer.</text>
</comment>
<comment type="subcellular location">
    <subcellularLocation>
        <location evidence="2">Mitochondrion inner membrane</location>
        <topology evidence="2">Multi-pass membrane protein</topology>
    </subcellularLocation>
</comment>
<comment type="miscellaneous">
    <text evidence="1">Heme 1 (or BL or b562) is low-potential and absorbs at about 562 nm, and heme 2 (or BH or b566) is high-potential and absorbs at about 566 nm.</text>
</comment>
<comment type="similarity">
    <text evidence="3 4">Belongs to the cytochrome b family.</text>
</comment>
<comment type="caution">
    <text evidence="2">The full-length protein contains only eight transmembrane helices, not nine as predicted by bioinformatics tools.</text>
</comment>
<evidence type="ECO:0000250" key="1"/>
<evidence type="ECO:0000250" key="2">
    <source>
        <dbReference type="UniProtKB" id="P00157"/>
    </source>
</evidence>
<evidence type="ECO:0000255" key="3">
    <source>
        <dbReference type="PROSITE-ProRule" id="PRU00967"/>
    </source>
</evidence>
<evidence type="ECO:0000255" key="4">
    <source>
        <dbReference type="PROSITE-ProRule" id="PRU00968"/>
    </source>
</evidence>
<geneLocation type="mitochondrion"/>
<feature type="chain" id="PRO_0000254831" description="Cytochrome b">
    <location>
        <begin position="1"/>
        <end position="381"/>
    </location>
</feature>
<feature type="transmembrane region" description="Helical" evidence="2">
    <location>
        <begin position="33"/>
        <end position="53"/>
    </location>
</feature>
<feature type="transmembrane region" description="Helical" evidence="2">
    <location>
        <begin position="77"/>
        <end position="98"/>
    </location>
</feature>
<feature type="transmembrane region" description="Helical" evidence="2">
    <location>
        <begin position="113"/>
        <end position="133"/>
    </location>
</feature>
<feature type="transmembrane region" description="Helical" evidence="2">
    <location>
        <begin position="178"/>
        <end position="198"/>
    </location>
</feature>
<feature type="transmembrane region" description="Helical" evidence="2">
    <location>
        <begin position="226"/>
        <end position="246"/>
    </location>
</feature>
<feature type="transmembrane region" description="Helical" evidence="2">
    <location>
        <begin position="288"/>
        <end position="308"/>
    </location>
</feature>
<feature type="transmembrane region" description="Helical" evidence="2">
    <location>
        <begin position="320"/>
        <end position="340"/>
    </location>
</feature>
<feature type="transmembrane region" description="Helical" evidence="2">
    <location>
        <begin position="347"/>
        <end position="367"/>
    </location>
</feature>
<feature type="binding site" description="axial binding residue" evidence="2">
    <location>
        <position position="83"/>
    </location>
    <ligand>
        <name>heme b</name>
        <dbReference type="ChEBI" id="CHEBI:60344"/>
        <label>b562</label>
    </ligand>
    <ligandPart>
        <name>Fe</name>
        <dbReference type="ChEBI" id="CHEBI:18248"/>
    </ligandPart>
</feature>
<feature type="binding site" description="axial binding residue" evidence="2">
    <location>
        <position position="97"/>
    </location>
    <ligand>
        <name>heme b</name>
        <dbReference type="ChEBI" id="CHEBI:60344"/>
        <label>b566</label>
    </ligand>
    <ligandPart>
        <name>Fe</name>
        <dbReference type="ChEBI" id="CHEBI:18248"/>
    </ligandPart>
</feature>
<feature type="binding site" description="axial binding residue" evidence="2">
    <location>
        <position position="182"/>
    </location>
    <ligand>
        <name>heme b</name>
        <dbReference type="ChEBI" id="CHEBI:60344"/>
        <label>b562</label>
    </ligand>
    <ligandPart>
        <name>Fe</name>
        <dbReference type="ChEBI" id="CHEBI:18248"/>
    </ligandPart>
</feature>
<feature type="binding site" description="axial binding residue" evidence="2">
    <location>
        <position position="196"/>
    </location>
    <ligand>
        <name>heme b</name>
        <dbReference type="ChEBI" id="CHEBI:60344"/>
        <label>b566</label>
    </ligand>
    <ligandPart>
        <name>Fe</name>
        <dbReference type="ChEBI" id="CHEBI:18248"/>
    </ligandPart>
</feature>
<feature type="binding site" evidence="2">
    <location>
        <position position="201"/>
    </location>
    <ligand>
        <name>a ubiquinone</name>
        <dbReference type="ChEBI" id="CHEBI:16389"/>
    </ligand>
</feature>
<protein>
    <recommendedName>
        <fullName>Cytochrome b</fullName>
    </recommendedName>
    <alternativeName>
        <fullName>Complex III subunit 3</fullName>
    </alternativeName>
    <alternativeName>
        <fullName>Complex III subunit III</fullName>
    </alternativeName>
    <alternativeName>
        <fullName>Cytochrome b-c1 complex subunit 3</fullName>
    </alternativeName>
    <alternativeName>
        <fullName>Ubiquinol-cytochrome-c reductase complex cytochrome b subunit</fullName>
    </alternativeName>
</protein>
<accession>P87410</accession>
<keyword id="KW-0249">Electron transport</keyword>
<keyword id="KW-0349">Heme</keyword>
<keyword id="KW-0408">Iron</keyword>
<keyword id="KW-0472">Membrane</keyword>
<keyword id="KW-0479">Metal-binding</keyword>
<keyword id="KW-0496">Mitochondrion</keyword>
<keyword id="KW-0999">Mitochondrion inner membrane</keyword>
<keyword id="KW-0679">Respiratory chain</keyword>
<keyword id="KW-0812">Transmembrane</keyword>
<keyword id="KW-1133">Transmembrane helix</keyword>
<keyword id="KW-0813">Transport</keyword>
<keyword id="KW-0830">Ubiquinone</keyword>
<organism>
    <name type="scientific">Myrmecobius fasciatus</name>
    <name type="common">Numbat</name>
    <dbReference type="NCBI Taxonomy" id="55782"/>
    <lineage>
        <taxon>Eukaryota</taxon>
        <taxon>Metazoa</taxon>
        <taxon>Chordata</taxon>
        <taxon>Craniata</taxon>
        <taxon>Vertebrata</taxon>
        <taxon>Euteleostomi</taxon>
        <taxon>Mammalia</taxon>
        <taxon>Metatheria</taxon>
        <taxon>Dasyuromorphia</taxon>
        <taxon>Myrmecobiidae</taxon>
        <taxon>Myrmecobius</taxon>
    </lineage>
</organism>